<comment type="function">
    <text>Permeabilizes a variety of cells. Forms large pores which allows the release of large proteins almost as rapidly as small organic molecules and inorganic ions. At sublytic concentrations, the toxin also inhibits protein kinase C and endogenous voltage-gated cation selective (sodium, calcium) channels occurring in the nervous and cardiovascular systems.</text>
</comment>
<comment type="subcellular location">
    <subcellularLocation>
        <location>Secreted</location>
    </subcellularLocation>
</comment>
<comment type="similarity">
    <text evidence="5">Belongs to the worm cytolysin family.</text>
</comment>
<organism>
    <name type="scientific">Cerebratulus lacteus</name>
    <name type="common">Milky ribbon worm</name>
    <name type="synonym">Micrura lactea</name>
    <dbReference type="NCBI Taxonomy" id="6221"/>
    <lineage>
        <taxon>Eukaryota</taxon>
        <taxon>Metazoa</taxon>
        <taxon>Spiralia</taxon>
        <taxon>Lophotrochozoa</taxon>
        <taxon>Nemertea</taxon>
        <taxon>Pilidiophora</taxon>
        <taxon>Heteronemertea</taxon>
        <taxon>Lineidae</taxon>
        <taxon>Cerebratulus</taxon>
    </lineage>
</organism>
<dbReference type="PIR" id="A01790">
    <property type="entry name" value="CWHNA3"/>
</dbReference>
<dbReference type="GO" id="GO:0005576">
    <property type="term" value="C:extracellular region"/>
    <property type="evidence" value="ECO:0007669"/>
    <property type="project" value="UniProtKB-SubCell"/>
</dbReference>
<dbReference type="GO" id="GO:0090729">
    <property type="term" value="F:toxin activity"/>
    <property type="evidence" value="ECO:0007669"/>
    <property type="project" value="UniProtKB-KW"/>
</dbReference>
<dbReference type="GO" id="GO:0031640">
    <property type="term" value="P:killing of cells of another organism"/>
    <property type="evidence" value="ECO:0007669"/>
    <property type="project" value="UniProtKB-KW"/>
</dbReference>
<protein>
    <recommendedName>
        <fullName evidence="4">Cerebratulus toxin A-III</fullName>
    </recommendedName>
    <alternativeName>
        <fullName evidence="5">Cytolysin A-III</fullName>
    </alternativeName>
    <alternativeName>
        <fullName evidence="3">Cytotoxin A-III</fullName>
    </alternativeName>
</protein>
<feature type="chain" id="PRO_0000221570" description="Cerebratulus toxin A-III" evidence="1">
    <location>
        <begin position="1"/>
        <end position="95"/>
    </location>
</feature>
<feature type="disulfide bond" evidence="2">
    <location>
        <begin position="17"/>
        <end position="38"/>
    </location>
</feature>
<feature type="disulfide bond" evidence="2">
    <location>
        <begin position="23"/>
        <end position="34"/>
    </location>
</feature>
<feature type="disulfide bond" evidence="2">
    <location>
        <begin position="48"/>
        <end position="61"/>
    </location>
</feature>
<proteinExistence type="evidence at protein level"/>
<evidence type="ECO:0000269" key="1">
    <source>
    </source>
</evidence>
<evidence type="ECO:0000269" key="2">
    <source>
    </source>
</evidence>
<evidence type="ECO:0000303" key="3">
    <source>
    </source>
</evidence>
<evidence type="ECO:0000303" key="4">
    <source>
    </source>
</evidence>
<evidence type="ECO:0000305" key="5"/>
<reference key="1">
    <citation type="journal article" date="1980" name="J. Biol. Chem.">
        <title>Structure and action of heteronemertine polypeptide toxins. Primary structure of Cerebratulus lacteus toxin A-III.</title>
        <authorList>
            <person name="Blumenthal K.M."/>
            <person name="Kem W.R."/>
        </authorList>
    </citation>
    <scope>PROTEIN SEQUENCE</scope>
</reference>
<reference key="2">
    <citation type="journal article" date="1980" name="J. Biol. Chem.">
        <title>Structure and action of heteronemertine polypeptide toxins. Disulfide bonds of Cerebratulus lacteus toxin A-III.</title>
        <authorList>
            <person name="Blumenthal K.M."/>
        </authorList>
    </citation>
    <scope>DISULFIDE BONDS</scope>
</reference>
<reference key="3">
    <citation type="journal article" date="1986" name="Int. J. Pept. Protein Res.">
        <title>Synthesis of sequences 1-16 and 63-95 of Cerebratulus lacteus toxin AIII. Hemolytic activity in a toxin fragment.</title>
        <authorList>
            <person name="Balasubramaniam A."/>
            <person name="Murphy R.F."/>
            <person name="Blumenthal K.M."/>
        </authorList>
    </citation>
    <scope>SYNTHESIS OF 1-16 AND 63-95</scope>
</reference>
<reference key="4">
    <citation type="journal article" date="1994" name="Toxicology">
        <title>Structure and membrane actions of a marine worm protein cytolysin, Cerebratulus toxin A-III.</title>
        <authorList>
            <person name="Kem W.R."/>
        </authorList>
    </citation>
    <scope>REVIEW</scope>
</reference>
<accession>P01527</accession>
<name>CXA3_CERLA</name>
<keyword id="KW-0204">Cytolysis</keyword>
<keyword id="KW-0903">Direct protein sequencing</keyword>
<keyword id="KW-1015">Disulfide bond</keyword>
<keyword id="KW-0964">Secreted</keyword>
<keyword id="KW-0800">Toxin</keyword>
<sequence>ISWPSYPGSEGIRSSNCQKKLNCGTKNIATKGVCKAFCLGRKRFWQKCGKNGSGSKGSKVCNAVLAHAVEKAGKGLIAVTDKAVAAIVKLAAGIA</sequence>